<keyword id="KW-0002">3D-structure</keyword>
<keyword id="KW-0106">Calcium</keyword>
<keyword id="KW-0119">Carbohydrate metabolism</keyword>
<keyword id="KW-0868">Chloride</keyword>
<keyword id="KW-1015">Disulfide bond</keyword>
<keyword id="KW-0325">Glycoprotein</keyword>
<keyword id="KW-0326">Glycosidase</keyword>
<keyword id="KW-0378">Hydrolase</keyword>
<keyword id="KW-0479">Metal-binding</keyword>
<keyword id="KW-1185">Reference proteome</keyword>
<keyword id="KW-0964">Secreted</keyword>
<keyword id="KW-0732">Signal</keyword>
<feature type="signal peptide" evidence="2">
    <location>
        <begin position="1"/>
        <end position="15"/>
    </location>
</feature>
<feature type="chain" id="PRO_5012994493" description="Alpha-amylase" evidence="2">
    <location>
        <begin position="16"/>
        <end position="512"/>
    </location>
</feature>
<feature type="active site" description="Nucleophile" evidence="1">
    <location>
        <position position="212"/>
    </location>
</feature>
<feature type="active site" description="Proton donor" evidence="1">
    <location>
        <position position="248"/>
    </location>
</feature>
<feature type="binding site" evidence="4 8">
    <location>
        <position position="115"/>
    </location>
    <ligand>
        <name>Ca(2+)</name>
        <dbReference type="ChEBI" id="CHEBI:29108"/>
    </ligand>
</feature>
<feature type="binding site" evidence="4 8">
    <location>
        <position position="173"/>
    </location>
    <ligand>
        <name>Ca(2+)</name>
        <dbReference type="ChEBI" id="CHEBI:29108"/>
    </ligand>
</feature>
<feature type="binding site" evidence="4 8">
    <location>
        <position position="182"/>
    </location>
    <ligand>
        <name>Ca(2+)</name>
        <dbReference type="ChEBI" id="CHEBI:29108"/>
    </ligand>
</feature>
<feature type="binding site" evidence="4 8">
    <location>
        <position position="210"/>
    </location>
    <ligand>
        <name>chloride</name>
        <dbReference type="ChEBI" id="CHEBI:17996"/>
    </ligand>
</feature>
<feature type="binding site" evidence="4 8">
    <location>
        <position position="216"/>
    </location>
    <ligand>
        <name>Ca(2+)</name>
        <dbReference type="ChEBI" id="CHEBI:29108"/>
    </ligand>
</feature>
<feature type="binding site" evidence="4 8">
    <location>
        <position position="352"/>
    </location>
    <ligand>
        <name>chloride</name>
        <dbReference type="ChEBI" id="CHEBI:17996"/>
    </ligand>
</feature>
<feature type="site" description="Transition state stabilizer" evidence="1">
    <location>
        <position position="315"/>
    </location>
</feature>
<feature type="glycosylation site" description="N-linked (GlcNAc...) asparagine" evidence="3">
    <location>
        <position position="496"/>
    </location>
</feature>
<feature type="disulfide bond" evidence="4 8">
    <location>
        <begin position="43"/>
        <end position="101"/>
    </location>
</feature>
<feature type="disulfide bond" evidence="4 8">
    <location>
        <begin position="85"/>
        <end position="130"/>
    </location>
</feature>
<feature type="disulfide bond" evidence="4 8">
    <location>
        <begin position="156"/>
        <end position="175"/>
    </location>
</feature>
<feature type="disulfide bond" evidence="4 8">
    <location>
        <begin position="394"/>
        <end position="400"/>
    </location>
</feature>
<feature type="disulfide bond" evidence="4 8">
    <location>
        <begin position="466"/>
        <end position="478"/>
    </location>
</feature>
<feature type="strand" evidence="9">
    <location>
        <begin position="27"/>
        <end position="30"/>
    </location>
</feature>
<feature type="helix" evidence="9">
    <location>
        <begin position="36"/>
        <end position="45"/>
    </location>
</feature>
<feature type="turn" evidence="9">
    <location>
        <begin position="46"/>
        <end position="51"/>
    </location>
</feature>
<feature type="strand" evidence="9">
    <location>
        <begin position="54"/>
        <end position="57"/>
    </location>
</feature>
<feature type="turn" evidence="9">
    <location>
        <begin position="67"/>
        <end position="70"/>
    </location>
</feature>
<feature type="helix" evidence="9">
    <location>
        <begin position="73"/>
        <end position="77"/>
    </location>
</feature>
<feature type="strand" evidence="9">
    <location>
        <begin position="78"/>
        <end position="80"/>
    </location>
</feature>
<feature type="helix" evidence="9">
    <location>
        <begin position="91"/>
        <end position="103"/>
    </location>
</feature>
<feature type="strand" evidence="9">
    <location>
        <begin position="107"/>
        <end position="112"/>
    </location>
</feature>
<feature type="strand" evidence="9">
    <location>
        <begin position="115"/>
        <end position="119"/>
    </location>
</feature>
<feature type="strand" evidence="9">
    <location>
        <begin position="124"/>
        <end position="126"/>
    </location>
</feature>
<feature type="turn" evidence="9">
    <location>
        <begin position="136"/>
        <end position="139"/>
    </location>
</feature>
<feature type="turn" evidence="9">
    <location>
        <begin position="142"/>
        <end position="145"/>
    </location>
</feature>
<feature type="helix" evidence="9">
    <location>
        <begin position="148"/>
        <end position="150"/>
    </location>
</feature>
<feature type="helix" evidence="9">
    <location>
        <begin position="153"/>
        <end position="155"/>
    </location>
</feature>
<feature type="strand" evidence="9">
    <location>
        <begin position="159"/>
        <end position="162"/>
    </location>
</feature>
<feature type="helix" evidence="9">
    <location>
        <begin position="169"/>
        <end position="174"/>
    </location>
</feature>
<feature type="strand" evidence="9">
    <location>
        <begin position="175"/>
        <end position="177"/>
    </location>
</feature>
<feature type="strand" evidence="9">
    <location>
        <begin position="180"/>
        <end position="183"/>
    </location>
</feature>
<feature type="helix" evidence="9">
    <location>
        <begin position="188"/>
        <end position="204"/>
    </location>
</feature>
<feature type="strand" evidence="9">
    <location>
        <begin position="208"/>
        <end position="211"/>
    </location>
</feature>
<feature type="helix" evidence="9">
    <location>
        <begin position="214"/>
        <end position="216"/>
    </location>
</feature>
<feature type="helix" evidence="9">
    <location>
        <begin position="219"/>
        <end position="226"/>
    </location>
</feature>
<feature type="turn" evidence="9">
    <location>
        <begin position="234"/>
        <end position="236"/>
    </location>
</feature>
<feature type="strand" evidence="9">
    <location>
        <begin position="244"/>
        <end position="247"/>
    </location>
</feature>
<feature type="helix" evidence="9">
    <location>
        <begin position="259"/>
        <end position="261"/>
    </location>
</feature>
<feature type="turn" evidence="9">
    <location>
        <begin position="262"/>
        <end position="265"/>
    </location>
</feature>
<feature type="strand" evidence="9">
    <location>
        <begin position="266"/>
        <end position="269"/>
    </location>
</feature>
<feature type="helix" evidence="9">
    <location>
        <begin position="271"/>
        <end position="282"/>
    </location>
</feature>
<feature type="helix" evidence="9">
    <location>
        <begin position="284"/>
        <end position="286"/>
    </location>
</feature>
<feature type="helix" evidence="9">
    <location>
        <begin position="289"/>
        <end position="294"/>
    </location>
</feature>
<feature type="helix" evidence="9">
    <location>
        <begin position="297"/>
        <end position="299"/>
    </location>
</feature>
<feature type="helix" evidence="9">
    <location>
        <begin position="304"/>
        <end position="306"/>
    </location>
</feature>
<feature type="strand" evidence="9">
    <location>
        <begin position="307"/>
        <end position="309"/>
    </location>
</feature>
<feature type="helix" evidence="9">
    <location>
        <begin position="316"/>
        <end position="318"/>
    </location>
</feature>
<feature type="helix" evidence="9">
    <location>
        <begin position="324"/>
        <end position="326"/>
    </location>
</feature>
<feature type="helix" evidence="9">
    <location>
        <begin position="333"/>
        <end position="345"/>
    </location>
</feature>
<feature type="strand" evidence="9">
    <location>
        <begin position="348"/>
        <end position="354"/>
    </location>
</feature>
<feature type="strand" evidence="9">
    <location>
        <begin position="363"/>
        <end position="368"/>
    </location>
</feature>
<feature type="turn" evidence="9">
    <location>
        <begin position="369"/>
        <end position="372"/>
    </location>
</feature>
<feature type="strand" evidence="9">
    <location>
        <begin position="375"/>
        <end position="377"/>
    </location>
</feature>
<feature type="helix" evidence="9">
    <location>
        <begin position="401"/>
        <end position="403"/>
    </location>
</feature>
<feature type="helix" evidence="9">
    <location>
        <begin position="405"/>
        <end position="417"/>
    </location>
</feature>
<feature type="strand" evidence="9">
    <location>
        <begin position="422"/>
        <end position="427"/>
    </location>
</feature>
<feature type="strand" evidence="9">
    <location>
        <begin position="429"/>
        <end position="437"/>
    </location>
</feature>
<feature type="turn" evidence="9">
    <location>
        <begin position="438"/>
        <end position="440"/>
    </location>
</feature>
<feature type="strand" evidence="9">
    <location>
        <begin position="441"/>
        <end position="446"/>
    </location>
</feature>
<feature type="strand" evidence="9">
    <location>
        <begin position="448"/>
        <end position="450"/>
    </location>
</feature>
<feature type="strand" evidence="9">
    <location>
        <begin position="452"/>
        <end position="457"/>
    </location>
</feature>
<feature type="strand" evidence="9">
    <location>
        <begin position="462"/>
        <end position="466"/>
    </location>
</feature>
<feature type="strand" evidence="9">
    <location>
        <begin position="477"/>
        <end position="480"/>
    </location>
</feature>
<feature type="strand" evidence="9">
    <location>
        <begin position="482"/>
        <end position="485"/>
    </location>
</feature>
<feature type="strand" evidence="9">
    <location>
        <begin position="489"/>
        <end position="495"/>
    </location>
</feature>
<feature type="strand" evidence="9">
    <location>
        <begin position="499"/>
        <end position="501"/>
    </location>
</feature>
<feature type="strand" evidence="9">
    <location>
        <begin position="503"/>
        <end position="507"/>
    </location>
</feature>
<feature type="helix" evidence="9">
    <location>
        <begin position="508"/>
        <end position="510"/>
    </location>
</feature>
<sequence>MKLFVLIALFGLGFAQHNPNTRDGRTAIVHLFEWRWADIAAECERFLGPKGFAGVQISPPNEHILVSSPWRPWWQRYQPISYNLCSRSGGENELRDMITRCNNVGVNVYVDAVINHMCGAGGGEGTHSSCGSWFNANNKDFPSVPYSNLDFNDGKCKTGSGNIENYGDPYQVRDCRLVGLLDLALEKDYVRGKVADFMNKLIDMGVAGFRVDACKHMWPGDLDNVYRRLNNLNTKWFPGGSRPFIFQEVIDLGGEPITTGEYVGLGRVTEFKYGARLGELFRKWNGQKLSYTKNWGEGWGFMADGNAVVFTDNHDNQRGHGAGGASILTFWDPRLYKMAVGYMLAHPYGFTRVMSSYSWDRNFVNGKDENDWIGPPSNGDGSTKPVPINPDQTCGDGWVCEHRWRQIMNMVQFRNVVNGQPHANWWDNGNNQVAFGRGNRGFIVFNNDDWALDVTLNTGLPGGTYCDVISGNKDGGSCTGKQITVGGDGRAHFYINNSEEDPFIAIHADSKL</sequence>
<protein>
    <recommendedName>
        <fullName evidence="5">Alpha-amylase</fullName>
        <ecNumber evidence="4">3.2.1.1</ecNumber>
    </recommendedName>
</protein>
<comment type="function">
    <text evidence="4">Catalyzes the hydrolysis of alpha-1,4 glycosidic linkages in starch, glycogen and similar oligosaccharides.</text>
</comment>
<comment type="catalytic activity">
    <reaction evidence="4">
        <text>Endohydrolysis of (1-&gt;4)-alpha-D-glucosidic linkages in polysaccharides containing three or more (1-&gt;4)-alpha-linked D-glucose units.</text>
        <dbReference type="EC" id="3.2.1.1"/>
    </reaction>
</comment>
<comment type="cofactor">
    <cofactor evidence="4">
        <name>Ca(2+)</name>
        <dbReference type="ChEBI" id="CHEBI:29108"/>
    </cofactor>
    <text evidence="4">Binds 1 Ca(2+) ion per subunit.</text>
</comment>
<comment type="cofactor">
    <cofactor evidence="4">
        <name>chloride</name>
        <dbReference type="ChEBI" id="CHEBI:17996"/>
    </cofactor>
    <text evidence="4">Binds 1 Cl(-) ion per subunit.</text>
</comment>
<comment type="biophysicochemical properties">
    <kinetics>
        <KM evidence="4">1.18 mg/ml for potato amylopectin</KM>
        <Vmax evidence="4">2560.0 umol/min/mg enzyme</Vmax>
    </kinetics>
    <phDependence>
        <text evidence="4">Optimum pH is 7.1.</text>
    </phDependence>
    <temperatureDependence>
        <text evidence="4">Optimum temperature is 50 degrees Celsius.</text>
    </temperatureDependence>
</comment>
<comment type="subcellular location">
    <subcellularLocation>
        <location evidence="6">Secreted</location>
    </subcellularLocation>
</comment>
<comment type="similarity">
    <text evidence="6">Belongs to the glycosyl hydrolase 13 family.</text>
</comment>
<dbReference type="EC" id="3.2.1.1" evidence="4"/>
<dbReference type="RefSeq" id="XP_004085115.1">
    <property type="nucleotide sequence ID" value="XM_004085067.4"/>
</dbReference>
<dbReference type="PDB" id="3VM5">
    <property type="method" value="X-ray"/>
    <property type="resolution" value="2.85 A"/>
    <property type="chains" value="A=16-512"/>
</dbReference>
<dbReference type="PDBsum" id="3VM5"/>
<dbReference type="SMR" id="H2N0D4"/>
<dbReference type="FunCoup" id="H2N0D4">
    <property type="interactions" value="217"/>
</dbReference>
<dbReference type="STRING" id="8090.ENSORLP00000024837"/>
<dbReference type="Ensembl" id="ENSORLT00000024838.2">
    <property type="protein sequence ID" value="ENSORLP00000024837.1"/>
    <property type="gene ID" value="ENSORLG00000020006.2"/>
</dbReference>
<dbReference type="GeneID" id="101163630"/>
<dbReference type="KEGG" id="ola:101163630"/>
<dbReference type="CTD" id="279"/>
<dbReference type="eggNOG" id="KOG2212">
    <property type="taxonomic scope" value="Eukaryota"/>
</dbReference>
<dbReference type="GeneTree" id="ENSGT00940000163518"/>
<dbReference type="HOGENOM" id="CLU_013336_2_1_1"/>
<dbReference type="InParanoid" id="H2N0D4"/>
<dbReference type="OMA" id="EHREVWS"/>
<dbReference type="OrthoDB" id="550577at2759"/>
<dbReference type="TreeFam" id="TF312850"/>
<dbReference type="BRENDA" id="3.2.1.1">
    <property type="organism ID" value="3199"/>
</dbReference>
<dbReference type="EvolutionaryTrace" id="H2N0D4"/>
<dbReference type="Proteomes" id="UP000001038">
    <property type="component" value="Chromosome 17"/>
</dbReference>
<dbReference type="Proteomes" id="UP000265180">
    <property type="component" value="Unplaced"/>
</dbReference>
<dbReference type="Proteomes" id="UP000265200">
    <property type="component" value="Unplaced"/>
</dbReference>
<dbReference type="Bgee" id="ENSORLG00000020006">
    <property type="expression patterns" value="Expressed in intestine and 12 other cell types or tissues"/>
</dbReference>
<dbReference type="GO" id="GO:0005615">
    <property type="term" value="C:extracellular space"/>
    <property type="evidence" value="ECO:0000318"/>
    <property type="project" value="GO_Central"/>
</dbReference>
<dbReference type="GO" id="GO:0004556">
    <property type="term" value="F:alpha-amylase activity"/>
    <property type="evidence" value="ECO:0007669"/>
    <property type="project" value="UniProtKB-EC"/>
</dbReference>
<dbReference type="GO" id="GO:0046872">
    <property type="term" value="F:metal ion binding"/>
    <property type="evidence" value="ECO:0007669"/>
    <property type="project" value="UniProtKB-KW"/>
</dbReference>
<dbReference type="GO" id="GO:0005975">
    <property type="term" value="P:carbohydrate metabolic process"/>
    <property type="evidence" value="ECO:0000318"/>
    <property type="project" value="GO_Central"/>
</dbReference>
<dbReference type="CDD" id="cd11317">
    <property type="entry name" value="AmyAc_bac_euk_AmyA"/>
    <property type="match status" value="1"/>
</dbReference>
<dbReference type="FunFam" id="2.60.40.1180:FF:000020">
    <property type="entry name" value="Pancreatic alpha-amylase"/>
    <property type="match status" value="1"/>
</dbReference>
<dbReference type="FunFam" id="3.20.20.80:FF:000056">
    <property type="entry name" value="Pancreatic alpha-amylase"/>
    <property type="match status" value="1"/>
</dbReference>
<dbReference type="Gene3D" id="3.20.20.80">
    <property type="entry name" value="Glycosidases"/>
    <property type="match status" value="1"/>
</dbReference>
<dbReference type="Gene3D" id="2.60.40.1180">
    <property type="entry name" value="Golgi alpha-mannosidase II"/>
    <property type="match status" value="1"/>
</dbReference>
<dbReference type="InterPro" id="IPR006048">
    <property type="entry name" value="A-amylase/branching_C"/>
</dbReference>
<dbReference type="InterPro" id="IPR031319">
    <property type="entry name" value="A-amylase_C"/>
</dbReference>
<dbReference type="InterPro" id="IPR006046">
    <property type="entry name" value="Alpha_amylase"/>
</dbReference>
<dbReference type="InterPro" id="IPR006047">
    <property type="entry name" value="Glyco_hydro_13_cat_dom"/>
</dbReference>
<dbReference type="InterPro" id="IPR013780">
    <property type="entry name" value="Glyco_hydro_b"/>
</dbReference>
<dbReference type="InterPro" id="IPR017853">
    <property type="entry name" value="Glycoside_hydrolase_SF"/>
</dbReference>
<dbReference type="PANTHER" id="PTHR43447">
    <property type="entry name" value="ALPHA-AMYLASE"/>
    <property type="match status" value="1"/>
</dbReference>
<dbReference type="Pfam" id="PF00128">
    <property type="entry name" value="Alpha-amylase"/>
    <property type="match status" value="1"/>
</dbReference>
<dbReference type="Pfam" id="PF02806">
    <property type="entry name" value="Alpha-amylase_C"/>
    <property type="match status" value="1"/>
</dbReference>
<dbReference type="PRINTS" id="PR00110">
    <property type="entry name" value="ALPHAAMYLASE"/>
</dbReference>
<dbReference type="SMART" id="SM00642">
    <property type="entry name" value="Aamy"/>
    <property type="match status" value="1"/>
</dbReference>
<dbReference type="SMART" id="SM00632">
    <property type="entry name" value="Aamy_C"/>
    <property type="match status" value="1"/>
</dbReference>
<dbReference type="SUPFAM" id="SSF51445">
    <property type="entry name" value="(Trans)glycosidases"/>
    <property type="match status" value="1"/>
</dbReference>
<dbReference type="SUPFAM" id="SSF51011">
    <property type="entry name" value="Glycosyl hydrolase domain"/>
    <property type="match status" value="1"/>
</dbReference>
<name>AMY_ORYLA</name>
<reference evidence="7" key="1">
    <citation type="journal article" date="2007" name="Nature">
        <title>The medaka draft genome and insights into vertebrate genome evolution.</title>
        <authorList>
            <person name="Kasahara M."/>
            <person name="Naruse K."/>
            <person name="Sasaki S."/>
            <person name="Nakatani Y."/>
            <person name="Qu W."/>
            <person name="Ahsan B."/>
            <person name="Yamada T."/>
            <person name="Nagayasu Y."/>
            <person name="Doi K."/>
            <person name="Kasai Y."/>
            <person name="Jindo T."/>
            <person name="Kobayashi D."/>
            <person name="Shimada A."/>
            <person name="Toyoda A."/>
            <person name="Kuroki Y."/>
            <person name="Fujiyama A."/>
            <person name="Sasaki T."/>
            <person name="Shimizu A."/>
            <person name="Asakawa S."/>
            <person name="Shimizu N."/>
            <person name="Hashimoto S."/>
            <person name="Yang J."/>
            <person name="Lee Y."/>
            <person name="Matsushima K."/>
            <person name="Sugano S."/>
            <person name="Sakaizumi M."/>
            <person name="Narita T."/>
            <person name="Ohishi K."/>
            <person name="Haga S."/>
            <person name="Ohta F."/>
            <person name="Nomoto H."/>
            <person name="Nogata K."/>
            <person name="Morishita T."/>
            <person name="Endo T."/>
            <person name="Shin-I T."/>
            <person name="Takeda H."/>
            <person name="Morishita S."/>
            <person name="Kohara Y."/>
        </authorList>
    </citation>
    <scope>NUCLEOTIDE SEQUENCE [LARGE SCALE GENOMIC DNA]</scope>
    <source>
        <strain evidence="7">Hd-rR</strain>
    </source>
</reference>
<reference evidence="8" key="2">
    <citation type="journal article" date="2012" name="Biochim. Biophys. Acta">
        <title>Structural and functional characterization of recombinant medaka fish alpha-amylase expressed in yeast Pichia pastoris.</title>
        <authorList>
            <person name="Mizutani K."/>
            <person name="Toyoda M."/>
            <person name="Otake Y."/>
            <person name="Yoshioka S."/>
            <person name="Takahashi N."/>
            <person name="Mikami B."/>
        </authorList>
    </citation>
    <scope>X-RAY CRYSTALLOGRAPHY (2.85 ANGSTROMS) OF 16-512 IN COMPLEX WITH CALCIUM AND CHLORIDE IONS</scope>
    <scope>FUNCTION</scope>
    <scope>CATALYTIC ACTIVITY</scope>
    <scope>COFACTOR</scope>
    <scope>BIOPHYSICOCHEMICAL PROPERTIES</scope>
    <scope>DISULFIDE BONDS</scope>
</reference>
<proteinExistence type="evidence at protein level"/>
<evidence type="ECO:0000250" key="1">
    <source>
        <dbReference type="UniProtKB" id="P04746"/>
    </source>
</evidence>
<evidence type="ECO:0000255" key="2"/>
<evidence type="ECO:0000255" key="3">
    <source>
        <dbReference type="PROSITE-ProRule" id="PRU00498"/>
    </source>
</evidence>
<evidence type="ECO:0000269" key="4">
    <source>
    </source>
</evidence>
<evidence type="ECO:0000303" key="5">
    <source>
    </source>
</evidence>
<evidence type="ECO:0000305" key="6"/>
<evidence type="ECO:0000312" key="7">
    <source>
        <dbReference type="Proteomes" id="UP000001038"/>
    </source>
</evidence>
<evidence type="ECO:0007744" key="8">
    <source>
        <dbReference type="PDB" id="3VM5"/>
    </source>
</evidence>
<evidence type="ECO:0007829" key="9">
    <source>
        <dbReference type="PDB" id="3VM5"/>
    </source>
</evidence>
<organism evidence="7">
    <name type="scientific">Oryzias latipes</name>
    <name type="common">Japanese rice fish</name>
    <name type="synonym">Japanese killifish</name>
    <dbReference type="NCBI Taxonomy" id="8090"/>
    <lineage>
        <taxon>Eukaryota</taxon>
        <taxon>Metazoa</taxon>
        <taxon>Chordata</taxon>
        <taxon>Craniata</taxon>
        <taxon>Vertebrata</taxon>
        <taxon>Euteleostomi</taxon>
        <taxon>Actinopterygii</taxon>
        <taxon>Neopterygii</taxon>
        <taxon>Teleostei</taxon>
        <taxon>Neoteleostei</taxon>
        <taxon>Acanthomorphata</taxon>
        <taxon>Ovalentaria</taxon>
        <taxon>Atherinomorphae</taxon>
        <taxon>Beloniformes</taxon>
        <taxon>Adrianichthyidae</taxon>
        <taxon>Oryziinae</taxon>
        <taxon>Oryzias</taxon>
    </lineage>
</organism>
<accession>H2N0D4</accession>